<gene>
    <name evidence="1" type="primary">gatC</name>
    <name type="ordered locus">BL0404</name>
</gene>
<comment type="function">
    <text evidence="1">Allows the formation of correctly charged Asn-tRNA(Asn) or Gln-tRNA(Gln) through the transamidation of misacylated Asp-tRNA(Asn) or Glu-tRNA(Gln) in organisms which lack either or both of asparaginyl-tRNA or glutaminyl-tRNA synthetases. The reaction takes place in the presence of glutamine and ATP through an activated phospho-Asp-tRNA(Asn) or phospho-Glu-tRNA(Gln).</text>
</comment>
<comment type="catalytic activity">
    <reaction evidence="1">
        <text>L-glutamyl-tRNA(Gln) + L-glutamine + ATP + H2O = L-glutaminyl-tRNA(Gln) + L-glutamate + ADP + phosphate + H(+)</text>
        <dbReference type="Rhea" id="RHEA:17521"/>
        <dbReference type="Rhea" id="RHEA-COMP:9681"/>
        <dbReference type="Rhea" id="RHEA-COMP:9684"/>
        <dbReference type="ChEBI" id="CHEBI:15377"/>
        <dbReference type="ChEBI" id="CHEBI:15378"/>
        <dbReference type="ChEBI" id="CHEBI:29985"/>
        <dbReference type="ChEBI" id="CHEBI:30616"/>
        <dbReference type="ChEBI" id="CHEBI:43474"/>
        <dbReference type="ChEBI" id="CHEBI:58359"/>
        <dbReference type="ChEBI" id="CHEBI:78520"/>
        <dbReference type="ChEBI" id="CHEBI:78521"/>
        <dbReference type="ChEBI" id="CHEBI:456216"/>
    </reaction>
</comment>
<comment type="catalytic activity">
    <reaction evidence="1">
        <text>L-aspartyl-tRNA(Asn) + L-glutamine + ATP + H2O = L-asparaginyl-tRNA(Asn) + L-glutamate + ADP + phosphate + 2 H(+)</text>
        <dbReference type="Rhea" id="RHEA:14513"/>
        <dbReference type="Rhea" id="RHEA-COMP:9674"/>
        <dbReference type="Rhea" id="RHEA-COMP:9677"/>
        <dbReference type="ChEBI" id="CHEBI:15377"/>
        <dbReference type="ChEBI" id="CHEBI:15378"/>
        <dbReference type="ChEBI" id="CHEBI:29985"/>
        <dbReference type="ChEBI" id="CHEBI:30616"/>
        <dbReference type="ChEBI" id="CHEBI:43474"/>
        <dbReference type="ChEBI" id="CHEBI:58359"/>
        <dbReference type="ChEBI" id="CHEBI:78515"/>
        <dbReference type="ChEBI" id="CHEBI:78516"/>
        <dbReference type="ChEBI" id="CHEBI:456216"/>
    </reaction>
</comment>
<comment type="subunit">
    <text evidence="1">Heterotrimer of A, B and C subunits.</text>
</comment>
<comment type="similarity">
    <text evidence="1">Belongs to the GatC family.</text>
</comment>
<comment type="sequence caution" evidence="2">
    <conflict type="erroneous initiation">
        <sequence resource="EMBL-CDS" id="AAN24241"/>
    </conflict>
</comment>
<keyword id="KW-0067">ATP-binding</keyword>
<keyword id="KW-0436">Ligase</keyword>
<keyword id="KW-0547">Nucleotide-binding</keyword>
<keyword id="KW-0648">Protein biosynthesis</keyword>
<keyword id="KW-1185">Reference proteome</keyword>
<organism>
    <name type="scientific">Bifidobacterium longum (strain NCC 2705)</name>
    <dbReference type="NCBI Taxonomy" id="206672"/>
    <lineage>
        <taxon>Bacteria</taxon>
        <taxon>Bacillati</taxon>
        <taxon>Actinomycetota</taxon>
        <taxon>Actinomycetes</taxon>
        <taxon>Bifidobacteriales</taxon>
        <taxon>Bifidobacteriaceae</taxon>
        <taxon>Bifidobacterium</taxon>
    </lineage>
</organism>
<name>GATC_BIFLO</name>
<reference key="1">
    <citation type="journal article" date="2002" name="Proc. Natl. Acad. Sci. U.S.A.">
        <title>The genome sequence of Bifidobacterium longum reflects its adaptation to the human gastrointestinal tract.</title>
        <authorList>
            <person name="Schell M.A."/>
            <person name="Karmirantzou M."/>
            <person name="Snel B."/>
            <person name="Vilanova D."/>
            <person name="Berger B."/>
            <person name="Pessi G."/>
            <person name="Zwahlen M.-C."/>
            <person name="Desiere F."/>
            <person name="Bork P."/>
            <person name="Delley M."/>
            <person name="Pridmore R.D."/>
            <person name="Arigoni F."/>
        </authorList>
    </citation>
    <scope>NUCLEOTIDE SEQUENCE [LARGE SCALE GENOMIC DNA]</scope>
    <source>
        <strain>NCC 2705</strain>
    </source>
</reference>
<proteinExistence type="inferred from homology"/>
<dbReference type="EC" id="6.3.5.-" evidence="1"/>
<dbReference type="EMBL" id="AE014295">
    <property type="protein sequence ID" value="AAN24241.1"/>
    <property type="status" value="ALT_INIT"/>
    <property type="molecule type" value="Genomic_DNA"/>
</dbReference>
<dbReference type="RefSeq" id="NP_695605.2">
    <property type="nucleotide sequence ID" value="NC_004307.2"/>
</dbReference>
<dbReference type="RefSeq" id="WP_011068473.1">
    <property type="nucleotide sequence ID" value="NC_004307.2"/>
</dbReference>
<dbReference type="SMR" id="Q8G767"/>
<dbReference type="STRING" id="206672.BL0404"/>
<dbReference type="EnsemblBacteria" id="AAN24241">
    <property type="protein sequence ID" value="AAN24241"/>
    <property type="gene ID" value="BL0404"/>
</dbReference>
<dbReference type="GeneID" id="69577472"/>
<dbReference type="KEGG" id="blo:BL0404"/>
<dbReference type="PATRIC" id="fig|206672.9.peg.1149"/>
<dbReference type="HOGENOM" id="CLU_105899_1_0_11"/>
<dbReference type="OrthoDB" id="5295223at2"/>
<dbReference type="PhylomeDB" id="Q8G767"/>
<dbReference type="PRO" id="PR:Q8G767"/>
<dbReference type="Proteomes" id="UP000000439">
    <property type="component" value="Chromosome"/>
</dbReference>
<dbReference type="GO" id="GO:0050566">
    <property type="term" value="F:asparaginyl-tRNA synthase (glutamine-hydrolyzing) activity"/>
    <property type="evidence" value="ECO:0007669"/>
    <property type="project" value="RHEA"/>
</dbReference>
<dbReference type="GO" id="GO:0005524">
    <property type="term" value="F:ATP binding"/>
    <property type="evidence" value="ECO:0007669"/>
    <property type="project" value="UniProtKB-KW"/>
</dbReference>
<dbReference type="GO" id="GO:0050567">
    <property type="term" value="F:glutaminyl-tRNA synthase (glutamine-hydrolyzing) activity"/>
    <property type="evidence" value="ECO:0007669"/>
    <property type="project" value="UniProtKB-UniRule"/>
</dbReference>
<dbReference type="GO" id="GO:0070681">
    <property type="term" value="P:glutaminyl-tRNAGln biosynthesis via transamidation"/>
    <property type="evidence" value="ECO:0007669"/>
    <property type="project" value="TreeGrafter"/>
</dbReference>
<dbReference type="GO" id="GO:0006450">
    <property type="term" value="P:regulation of translational fidelity"/>
    <property type="evidence" value="ECO:0007669"/>
    <property type="project" value="InterPro"/>
</dbReference>
<dbReference type="GO" id="GO:0006412">
    <property type="term" value="P:translation"/>
    <property type="evidence" value="ECO:0007669"/>
    <property type="project" value="UniProtKB-UniRule"/>
</dbReference>
<dbReference type="Gene3D" id="1.10.20.60">
    <property type="entry name" value="Glu-tRNAGln amidotransferase C subunit, N-terminal domain"/>
    <property type="match status" value="1"/>
</dbReference>
<dbReference type="HAMAP" id="MF_00122">
    <property type="entry name" value="GatC"/>
    <property type="match status" value="1"/>
</dbReference>
<dbReference type="InterPro" id="IPR036113">
    <property type="entry name" value="Asp/Glu-ADT_sf_sub_c"/>
</dbReference>
<dbReference type="InterPro" id="IPR003837">
    <property type="entry name" value="GatC"/>
</dbReference>
<dbReference type="NCBIfam" id="TIGR00135">
    <property type="entry name" value="gatC"/>
    <property type="match status" value="1"/>
</dbReference>
<dbReference type="PANTHER" id="PTHR15004">
    <property type="entry name" value="GLUTAMYL-TRNA(GLN) AMIDOTRANSFERASE SUBUNIT C, MITOCHONDRIAL"/>
    <property type="match status" value="1"/>
</dbReference>
<dbReference type="PANTHER" id="PTHR15004:SF0">
    <property type="entry name" value="GLUTAMYL-TRNA(GLN) AMIDOTRANSFERASE SUBUNIT C, MITOCHONDRIAL"/>
    <property type="match status" value="1"/>
</dbReference>
<dbReference type="Pfam" id="PF02686">
    <property type="entry name" value="GatC"/>
    <property type="match status" value="1"/>
</dbReference>
<dbReference type="SUPFAM" id="SSF141000">
    <property type="entry name" value="Glu-tRNAGln amidotransferase C subunit"/>
    <property type="match status" value="1"/>
</dbReference>
<feature type="chain" id="PRO_0000105277" description="Aspartyl/glutamyl-tRNA(Asn/Gln) amidotransferase subunit C">
    <location>
        <begin position="1"/>
        <end position="99"/>
    </location>
</feature>
<accession>Q8G767</accession>
<sequence>MPTFSREEIVHLGDLARIALTDEEITRLQGELNVIADSINKVQEVASDDVPPTANPVPLEAYLRPDVAETPLTQEEALAGGPKTEAGMFVAPRILGSEE</sequence>
<evidence type="ECO:0000255" key="1">
    <source>
        <dbReference type="HAMAP-Rule" id="MF_00122"/>
    </source>
</evidence>
<evidence type="ECO:0000305" key="2"/>
<protein>
    <recommendedName>
        <fullName evidence="1">Aspartyl/glutamyl-tRNA(Asn/Gln) amidotransferase subunit C</fullName>
        <shortName evidence="1">Asp/Glu-ADT subunit C</shortName>
        <ecNumber evidence="1">6.3.5.-</ecNumber>
    </recommendedName>
</protein>